<dbReference type="EC" id="2.7.7.7" evidence="1"/>
<dbReference type="EC" id="2.7.7.49" evidence="1"/>
<dbReference type="EC" id="3.1.26.4" evidence="1"/>
<dbReference type="EMBL" id="AY090454">
    <property type="protein sequence ID" value="AAM09041.1"/>
    <property type="molecule type" value="Genomic_DNA"/>
</dbReference>
<dbReference type="Proteomes" id="UP000001182">
    <property type="component" value="Segment"/>
</dbReference>
<dbReference type="GO" id="GO:0003677">
    <property type="term" value="F:DNA binding"/>
    <property type="evidence" value="ECO:0007669"/>
    <property type="project" value="UniProtKB-UniRule"/>
</dbReference>
<dbReference type="GO" id="GO:0003887">
    <property type="term" value="F:DNA-directed DNA polymerase activity"/>
    <property type="evidence" value="ECO:0007669"/>
    <property type="project" value="UniProtKB-UniRule"/>
</dbReference>
<dbReference type="GO" id="GO:0046872">
    <property type="term" value="F:metal ion binding"/>
    <property type="evidence" value="ECO:0007669"/>
    <property type="project" value="UniProtKB-UniRule"/>
</dbReference>
<dbReference type="GO" id="GO:0003964">
    <property type="term" value="F:RNA-directed DNA polymerase activity"/>
    <property type="evidence" value="ECO:0007669"/>
    <property type="project" value="UniProtKB-UniRule"/>
</dbReference>
<dbReference type="GO" id="GO:0004523">
    <property type="term" value="F:RNA-DNA hybrid ribonuclease activity"/>
    <property type="evidence" value="ECO:0007669"/>
    <property type="project" value="UniProtKB-UniRule"/>
</dbReference>
<dbReference type="GO" id="GO:0006260">
    <property type="term" value="P:DNA replication"/>
    <property type="evidence" value="ECO:0007669"/>
    <property type="project" value="UniProtKB-UniRule"/>
</dbReference>
<dbReference type="GO" id="GO:0052170">
    <property type="term" value="P:symbiont-mediated suppression of host innate immune response"/>
    <property type="evidence" value="ECO:0007669"/>
    <property type="project" value="UniProtKB-UniRule"/>
</dbReference>
<dbReference type="FunFam" id="3.30.70.270:FF:000009">
    <property type="entry name" value="Protein P"/>
    <property type="match status" value="1"/>
</dbReference>
<dbReference type="Gene3D" id="3.30.70.270">
    <property type="match status" value="1"/>
</dbReference>
<dbReference type="HAMAP" id="MF_04073">
    <property type="entry name" value="HBV_DPOL"/>
    <property type="match status" value="1"/>
</dbReference>
<dbReference type="InterPro" id="IPR043502">
    <property type="entry name" value="DNA/RNA_pol_sf"/>
</dbReference>
<dbReference type="InterPro" id="IPR001462">
    <property type="entry name" value="DNApol_viral_C"/>
</dbReference>
<dbReference type="InterPro" id="IPR000201">
    <property type="entry name" value="DNApol_viral_N"/>
</dbReference>
<dbReference type="InterPro" id="IPR037531">
    <property type="entry name" value="HBV_DPOL"/>
</dbReference>
<dbReference type="InterPro" id="IPR043128">
    <property type="entry name" value="Rev_trsase/Diguanyl_cyclase"/>
</dbReference>
<dbReference type="InterPro" id="IPR000477">
    <property type="entry name" value="RT_dom"/>
</dbReference>
<dbReference type="InterPro" id="IPR051320">
    <property type="entry name" value="Viral_Replic_Matur_Polypro"/>
</dbReference>
<dbReference type="PANTHER" id="PTHR33064:SF29">
    <property type="entry name" value="PEPTIDASE A2 DOMAIN-CONTAINING PROTEIN-RELATED"/>
    <property type="match status" value="1"/>
</dbReference>
<dbReference type="PANTHER" id="PTHR33064">
    <property type="entry name" value="POL PROTEIN"/>
    <property type="match status" value="1"/>
</dbReference>
<dbReference type="Pfam" id="PF00336">
    <property type="entry name" value="DNA_pol_viral_C"/>
    <property type="match status" value="1"/>
</dbReference>
<dbReference type="Pfam" id="PF00242">
    <property type="entry name" value="DNA_pol_viral_N"/>
    <property type="match status" value="1"/>
</dbReference>
<dbReference type="Pfam" id="PF00078">
    <property type="entry name" value="RVT_1"/>
    <property type="match status" value="1"/>
</dbReference>
<dbReference type="SUPFAM" id="SSF56672">
    <property type="entry name" value="DNA/RNA polymerases"/>
    <property type="match status" value="1"/>
</dbReference>
<dbReference type="PROSITE" id="PS50878">
    <property type="entry name" value="RT_POL"/>
    <property type="match status" value="1"/>
</dbReference>
<organismHost>
    <name type="scientific">Homo sapiens</name>
    <name type="common">Human</name>
    <dbReference type="NCBI Taxonomy" id="9606"/>
</organismHost>
<organismHost>
    <name type="scientific">Pan troglodytes</name>
    <name type="common">Chimpanzee</name>
    <dbReference type="NCBI Taxonomy" id="9598"/>
</organismHost>
<name>DPOL_HBVH2</name>
<reference key="1">
    <citation type="journal article" date="2002" name="J. Gen. Virol.">
        <title>Genotype H: a new Amerindian genotype of hepatitis B virus revealed in Central America.</title>
        <authorList>
            <person name="Arauz-Ruiz P."/>
            <person name="Norder H."/>
            <person name="Robertson B.H."/>
            <person name="Magnius L.O."/>
        </authorList>
    </citation>
    <scope>NUCLEOTIDE SEQUENCE [GENOMIC DNA]</scope>
</reference>
<reference key="2">
    <citation type="journal article" date="2007" name="World J. Gastroenterol.">
        <title>Hepatitis B virus replication.</title>
        <authorList>
            <person name="Beck J."/>
            <person name="Nassal M."/>
        </authorList>
    </citation>
    <scope>REVIEW</scope>
</reference>
<comment type="function">
    <text evidence="1">Multifunctional enzyme that converts the viral RNA genome into dsDNA in viral cytoplasmic capsids. This enzyme displays a DNA polymerase activity that can copy either DNA or RNA templates, and a ribonuclease H (RNase H) activity that cleaves the RNA strand of RNA-DNA heteroduplexes in a partially processive 3'- to 5'-endonucleasic mode. Neo-synthesized pregenomic RNA (pgRNA) are encapsidated together with the P protein, and reverse-transcribed inside the nucleocapsid. Initiation of reverse-transcription occurs first by binding the epsilon loop on the pgRNA genome, and is initiated by protein priming, thereby the 5'-end of (-)DNA is covalently linked to P protein. Partial (+)DNA is synthesized from the (-)DNA template and generates the relaxed circular DNA (RC-DNA) genome. After budding and infection, the RC-DNA migrates in the nucleus, and is converted into a plasmid-like covalently closed circular DNA (cccDNA). The activity of P protein does not seem to be necessary for cccDNA generation, and is presumably released from (+)DNA by host nuclear DNA repair machinery.</text>
</comment>
<comment type="catalytic activity">
    <reaction evidence="1">
        <text>DNA(n) + a 2'-deoxyribonucleoside 5'-triphosphate = DNA(n+1) + diphosphate</text>
        <dbReference type="Rhea" id="RHEA:22508"/>
        <dbReference type="Rhea" id="RHEA-COMP:17339"/>
        <dbReference type="Rhea" id="RHEA-COMP:17340"/>
        <dbReference type="ChEBI" id="CHEBI:33019"/>
        <dbReference type="ChEBI" id="CHEBI:61560"/>
        <dbReference type="ChEBI" id="CHEBI:173112"/>
        <dbReference type="EC" id="2.7.7.7"/>
    </reaction>
</comment>
<comment type="catalytic activity">
    <reaction evidence="1">
        <text>DNA(n) + a 2'-deoxyribonucleoside 5'-triphosphate = DNA(n+1) + diphosphate</text>
        <dbReference type="Rhea" id="RHEA:22508"/>
        <dbReference type="Rhea" id="RHEA-COMP:17339"/>
        <dbReference type="Rhea" id="RHEA-COMP:17340"/>
        <dbReference type="ChEBI" id="CHEBI:33019"/>
        <dbReference type="ChEBI" id="CHEBI:61560"/>
        <dbReference type="ChEBI" id="CHEBI:173112"/>
        <dbReference type="EC" id="2.7.7.49"/>
    </reaction>
</comment>
<comment type="catalytic activity">
    <reaction evidence="1">
        <text>Endonucleolytic cleavage to 5'-phosphomonoester.</text>
        <dbReference type="EC" id="3.1.26.4"/>
    </reaction>
</comment>
<comment type="activity regulation">
    <text evidence="1">Activated by host HSP70 and HSP40 in vitro to be able to bind the epsilon loop of the pgRNA. Because deletion of the RNase H region renders the protein partly chaperone-independent, the chaperones may be needed indirectly to relieve occlusion of the RNA-binding site by this domain. Inhibited by several reverse-transcriptase inhibitors: Lamivudine, Adefovir and Entecavir.</text>
</comment>
<comment type="domain">
    <text evidence="1">Terminal protein domain (TP) is hepadnavirus-specific. Spacer domain is highly variable and separates the TP and RT domains. Polymerase/reverse-transcriptase domain (RT) and ribonuclease H domain (RH) are similar to retrovirus reverse transcriptase/RNase H.</text>
</comment>
<comment type="domain">
    <text evidence="1">The polymerase/reverse transcriptase (RT) and ribonuclease H (RH) domains are structured in five subdomains: finger, palm, thumb, connection and RNase H. Within the palm subdomain, the 'primer grip' region is thought to be involved in the positioning of the primer terminus for accommodating the incoming nucleotide. The RH domain stabilizes the association of RT with primer-template.</text>
</comment>
<comment type="miscellaneous">
    <text evidence="1">Hepadnaviral virions contain probably just one P protein molecule per particle.</text>
</comment>
<comment type="similarity">
    <text evidence="1">Belongs to the hepadnaviridae P protein family.</text>
</comment>
<evidence type="ECO:0000255" key="1">
    <source>
        <dbReference type="HAMAP-Rule" id="MF_04073"/>
    </source>
</evidence>
<evidence type="ECO:0000256" key="2">
    <source>
        <dbReference type="SAM" id="MobiDB-lite"/>
    </source>
</evidence>
<gene>
    <name evidence="1" type="primary">P</name>
</gene>
<keyword id="KW-0235">DNA replication</keyword>
<keyword id="KW-0238">DNA-binding</keyword>
<keyword id="KW-0239">DNA-directed DNA polymerase</keyword>
<keyword id="KW-0255">Endonuclease</keyword>
<keyword id="KW-0945">Host-virus interaction</keyword>
<keyword id="KW-0378">Hydrolase</keyword>
<keyword id="KW-1090">Inhibition of host innate immune response by virus</keyword>
<keyword id="KW-1113">Inhibition of host RLR pathway by virus</keyword>
<keyword id="KW-0460">Magnesium</keyword>
<keyword id="KW-0479">Metal-binding</keyword>
<keyword id="KW-0511">Multifunctional enzyme</keyword>
<keyword id="KW-0540">Nuclease</keyword>
<keyword id="KW-0548">Nucleotidyltransferase</keyword>
<keyword id="KW-0695">RNA-directed DNA polymerase</keyword>
<keyword id="KW-0808">Transferase</keyword>
<keyword id="KW-0899">Viral immunoevasion</keyword>
<sequence length="843" mass="94697">MPLSYQHFRRLLLLDNEAGPLEEELPRLADEDLNHRVAEDLNLQLPNVSIPWTHKVGNFTGLYSSTVPVFNPDWLTPSFPDIHLHQDLIQKCEQFVRPLTKNEVRRLKLIMPARFYPKATKYFPLDKGIKPYYPENVVNHYFKTTHYLHTLWKARILYKRESTHSASFCGSPYSWEQELQHGSTSLNGEKGHGTESLCAQSSGILSRPPVGSTIQSKFQQSRLGLQHKQGQLANGKQGRSGRLWSRVHTPTRWPSGVEPSGTGHSDNLATRSTSRFHQSEVRKETNPSLSTSKGHTSTGHAVELNTVPPSTVGSESQGSVFSCWWLQFRNTEPCSDYCLSHIINLLEDWGPCYEHGEHHIRTPRTPSRVTGGVFLVDKNPHNTTESRLVVDFSQFSRGTTRVSWPKFAVPNLQSLTNLLSSNLSWLSLDVSAAFYHLPLHPAAMPHLLVGSSGLSRYVARVSSTSRIYNHQHGTLQNLHHSCSRNLYVSLLLLYQTFGRKLHLYSHPIILGFRKIPMGVGLSPFLLAQFTSAICSVVRRAFPHCLAFSYMDDLVLGAKSVQHLESLYTAVTNFLLSVGIHLNTAKTKWWGYSLHFMGYIIGSWGTLPQEHIVQKIKNCFRKLPVNRPIDWKVCQRIVGLLGFAAPFTQCGYPALMPLYACITAKQAFVFSPTYKAFLCKQYMNLYPVARQRPGLCQVFADATPTGWGLAIGHQRMRGTFVAPLPIHTAELLAACFARSRSGADIIGTDNSVVLSRKYTSFPWLLGCAANWILRGTSFVYVPSALNPADDPSRGRLGLCRPLLRLPFRPTTGRTSLYADSPPVPFHQPARVHFGSPLHVAWRPP</sequence>
<proteinExistence type="inferred from homology"/>
<accession>Q8JN08</accession>
<feature type="chain" id="PRO_0000323281" description="Protein P">
    <location>
        <begin position="1"/>
        <end position="843"/>
    </location>
</feature>
<feature type="domain" description="Reverse transcriptase" evidence="1">
    <location>
        <begin position="357"/>
        <end position="600"/>
    </location>
</feature>
<feature type="region of interest" description="Terminal protein domain (TP)" evidence="1">
    <location>
        <begin position="1"/>
        <end position="177"/>
    </location>
</feature>
<feature type="region of interest" description="Spacer" evidence="1">
    <location>
        <begin position="178"/>
        <end position="346"/>
    </location>
</feature>
<feature type="region of interest" description="Disordered" evidence="2">
    <location>
        <begin position="249"/>
        <end position="301"/>
    </location>
</feature>
<feature type="region of interest" description="Polymerase/reverse transcriptase domain (RT)" evidence="1">
    <location>
        <begin position="347"/>
        <end position="690"/>
    </location>
</feature>
<feature type="compositionally biased region" description="Polar residues" evidence="2">
    <location>
        <begin position="262"/>
        <end position="276"/>
    </location>
</feature>
<feature type="compositionally biased region" description="Polar residues" evidence="2">
    <location>
        <begin position="286"/>
        <end position="299"/>
    </location>
</feature>
<feature type="binding site" evidence="1">
    <location>
        <position position="429"/>
    </location>
    <ligand>
        <name>Mg(2+)</name>
        <dbReference type="ChEBI" id="CHEBI:18420"/>
        <note>catalytic</note>
    </ligand>
</feature>
<feature type="binding site" evidence="1">
    <location>
        <position position="551"/>
    </location>
    <ligand>
        <name>Mg(2+)</name>
        <dbReference type="ChEBI" id="CHEBI:18420"/>
        <note>catalytic</note>
    </ligand>
</feature>
<feature type="binding site" evidence="1">
    <location>
        <position position="552"/>
    </location>
    <ligand>
        <name>Mg(2+)</name>
        <dbReference type="ChEBI" id="CHEBI:18420"/>
        <note>catalytic</note>
    </ligand>
</feature>
<feature type="site" description="Priming of reverse-transcription by covalently linking the first nucleotide of the (-)DNA" evidence="1">
    <location>
        <position position="63"/>
    </location>
</feature>
<protein>
    <recommendedName>
        <fullName evidence="1">Protein P</fullName>
    </recommendedName>
    <domain>
        <recommendedName>
            <fullName evidence="1">DNA-directed DNA polymerase</fullName>
            <ecNumber evidence="1">2.7.7.7</ecNumber>
        </recommendedName>
    </domain>
    <domain>
        <recommendedName>
            <fullName evidence="1">RNA-directed DNA polymerase</fullName>
            <ecNumber evidence="1">2.7.7.49</ecNumber>
        </recommendedName>
    </domain>
    <domain>
        <recommendedName>
            <fullName evidence="1">Ribonuclease H</fullName>
            <ecNumber evidence="1">3.1.26.4</ecNumber>
        </recommendedName>
    </domain>
</protein>
<organism>
    <name type="scientific">Hepatitis B virus genotype H subtype adw4 (isolate Nicaragua/1853Nic/1997)</name>
    <name type="common">HBV-H</name>
    <dbReference type="NCBI Taxonomy" id="489540"/>
    <lineage>
        <taxon>Viruses</taxon>
        <taxon>Riboviria</taxon>
        <taxon>Pararnavirae</taxon>
        <taxon>Artverviricota</taxon>
        <taxon>Revtraviricetes</taxon>
        <taxon>Blubervirales</taxon>
        <taxon>Hepadnaviridae</taxon>
        <taxon>Orthohepadnavirus</taxon>
        <taxon>Hepatitis B virus</taxon>
        <taxon>hepatitis B virus genotype H</taxon>
    </lineage>
</organism>